<proteinExistence type="inferred from homology"/>
<keyword id="KW-0274">FAD</keyword>
<keyword id="KW-0285">Flavoprotein</keyword>
<keyword id="KW-0560">Oxidoreductase</keyword>
<keyword id="KW-0614">Plasmid</keyword>
<comment type="function">
    <text evidence="1">Oxidative deamination of D-amino acids.</text>
</comment>
<comment type="catalytic activity">
    <reaction evidence="1">
        <text>a D-alpha-amino acid + A + H2O = a 2-oxocarboxylate + AH2 + NH4(+)</text>
        <dbReference type="Rhea" id="RHEA:18125"/>
        <dbReference type="ChEBI" id="CHEBI:13193"/>
        <dbReference type="ChEBI" id="CHEBI:15377"/>
        <dbReference type="ChEBI" id="CHEBI:17499"/>
        <dbReference type="ChEBI" id="CHEBI:28938"/>
        <dbReference type="ChEBI" id="CHEBI:35179"/>
        <dbReference type="ChEBI" id="CHEBI:59871"/>
    </reaction>
</comment>
<comment type="cofactor">
    <cofactor evidence="1">
        <name>FAD</name>
        <dbReference type="ChEBI" id="CHEBI:57692"/>
    </cofactor>
</comment>
<comment type="pathway">
    <text>Amino-acid degradation; D-alanine degradation; NH(3) and pyruvate from D-alanine: step 1/1.</text>
</comment>
<comment type="similarity">
    <text evidence="1">Belongs to the DadA oxidoreductase family.</text>
</comment>
<sequence length="416" mass="44838">MKVIVLGAGIVGVTSAYQLAKAGHDVTVVDRQPGPALETSFANAGEVSFGYCSPWAAPGIPMKAMKWLFMKHAPLILRPKLDMAMLSWMARMLSNCTSERYAINKSRMLRLADYSRIALADLRAETGIAYDERMQGTLQLFRTQQQLEASAKDVKALAADGIPYEVLDRDGCIRFEPALKHVRDKIVGGLLTPKDETGDCFKFTNALAAKAEALGVRFAYGTTIKALDVEAGRVRGVITDRERMSAEAVVVALGSYSPLLLKPLGIRLPVYPVKGYSLTIPIADASRAPESTVMDETYKIAITRLGDRIRVGGMAEISGYTNDLGLARRSTLEYSVTDLFPGGDISKASFWSGLRPMTPDGTPVIGPTKVAGLFLNTGHGTLGWTMSTGSARLIGDLVGGGQPEIDARDLAITRYG</sequence>
<accession>Q9RAE6</accession>
<accession>Q1M446</accession>
<organism>
    <name type="scientific">Rhizobium johnstonii (strain DSM 114642 / LMG 32736 / 3841)</name>
    <name type="common">Rhizobium leguminosarum bv. viciae</name>
    <dbReference type="NCBI Taxonomy" id="216596"/>
    <lineage>
        <taxon>Bacteria</taxon>
        <taxon>Pseudomonadati</taxon>
        <taxon>Pseudomonadota</taxon>
        <taxon>Alphaproteobacteria</taxon>
        <taxon>Hyphomicrobiales</taxon>
        <taxon>Rhizobiaceae</taxon>
        <taxon>Rhizobium/Agrobacterium group</taxon>
        <taxon>Rhizobium</taxon>
        <taxon>Rhizobium johnstonii</taxon>
    </lineage>
</organism>
<dbReference type="EC" id="1.4.99.-" evidence="1"/>
<dbReference type="EMBL" id="AJ249196">
    <property type="protein sequence ID" value="CAB53548.1"/>
    <property type="molecule type" value="Genomic_DNA"/>
</dbReference>
<dbReference type="EMBL" id="AM236086">
    <property type="protein sequence ID" value="CAK12126.1"/>
    <property type="molecule type" value="Genomic_DNA"/>
</dbReference>
<dbReference type="RefSeq" id="WP_011649182.1">
    <property type="nucleotide sequence ID" value="NC_008378.1"/>
</dbReference>
<dbReference type="SMR" id="Q9RAE6"/>
<dbReference type="EnsemblBacteria" id="CAK12126">
    <property type="protein sequence ID" value="CAK12126"/>
    <property type="gene ID" value="pRL120417"/>
</dbReference>
<dbReference type="KEGG" id="rle:pRL120417"/>
<dbReference type="eggNOG" id="COG0665">
    <property type="taxonomic scope" value="Bacteria"/>
</dbReference>
<dbReference type="HOGENOM" id="CLU_007884_9_2_5"/>
<dbReference type="UniPathway" id="UPA00043">
    <property type="reaction ID" value="UER00498"/>
</dbReference>
<dbReference type="Proteomes" id="UP000006575">
    <property type="component" value="Plasmid pRL12"/>
</dbReference>
<dbReference type="GO" id="GO:0005737">
    <property type="term" value="C:cytoplasm"/>
    <property type="evidence" value="ECO:0007669"/>
    <property type="project" value="TreeGrafter"/>
</dbReference>
<dbReference type="GO" id="GO:0005886">
    <property type="term" value="C:plasma membrane"/>
    <property type="evidence" value="ECO:0007669"/>
    <property type="project" value="TreeGrafter"/>
</dbReference>
<dbReference type="GO" id="GO:0008718">
    <property type="term" value="F:D-amino-acid dehydrogenase activity"/>
    <property type="evidence" value="ECO:0007669"/>
    <property type="project" value="UniProtKB-UniRule"/>
</dbReference>
<dbReference type="GO" id="GO:0055130">
    <property type="term" value="P:D-alanine catabolic process"/>
    <property type="evidence" value="ECO:0007669"/>
    <property type="project" value="UniProtKB-UniPathway"/>
</dbReference>
<dbReference type="FunFam" id="3.50.50.60:FF:000020">
    <property type="entry name" value="D-amino acid dehydrogenase"/>
    <property type="match status" value="1"/>
</dbReference>
<dbReference type="Gene3D" id="3.30.9.10">
    <property type="entry name" value="D-Amino Acid Oxidase, subunit A, domain 2"/>
    <property type="match status" value="1"/>
</dbReference>
<dbReference type="Gene3D" id="3.50.50.60">
    <property type="entry name" value="FAD/NAD(P)-binding domain"/>
    <property type="match status" value="2"/>
</dbReference>
<dbReference type="HAMAP" id="MF_01202">
    <property type="entry name" value="DadA"/>
    <property type="match status" value="1"/>
</dbReference>
<dbReference type="InterPro" id="IPR023080">
    <property type="entry name" value="DadA"/>
</dbReference>
<dbReference type="InterPro" id="IPR006076">
    <property type="entry name" value="FAD-dep_OxRdtase"/>
</dbReference>
<dbReference type="InterPro" id="IPR036188">
    <property type="entry name" value="FAD/NAD-bd_sf"/>
</dbReference>
<dbReference type="NCBIfam" id="NF001933">
    <property type="entry name" value="PRK00711.1"/>
    <property type="match status" value="1"/>
</dbReference>
<dbReference type="PANTHER" id="PTHR13847:SF280">
    <property type="entry name" value="D-AMINO ACID DEHYDROGENASE"/>
    <property type="match status" value="1"/>
</dbReference>
<dbReference type="PANTHER" id="PTHR13847">
    <property type="entry name" value="SARCOSINE DEHYDROGENASE-RELATED"/>
    <property type="match status" value="1"/>
</dbReference>
<dbReference type="Pfam" id="PF01266">
    <property type="entry name" value="DAO"/>
    <property type="match status" value="1"/>
</dbReference>
<dbReference type="SUPFAM" id="SSF54373">
    <property type="entry name" value="FAD-linked reductases, C-terminal domain"/>
    <property type="match status" value="1"/>
</dbReference>
<dbReference type="SUPFAM" id="SSF51905">
    <property type="entry name" value="FAD/NAD(P)-binding domain"/>
    <property type="match status" value="1"/>
</dbReference>
<feature type="chain" id="PRO_0000166148" description="D-amino acid dehydrogenase">
    <location>
        <begin position="1"/>
        <end position="416"/>
    </location>
</feature>
<feature type="binding site" evidence="1">
    <location>
        <begin position="3"/>
        <end position="17"/>
    </location>
    <ligand>
        <name>FAD</name>
        <dbReference type="ChEBI" id="CHEBI:57692"/>
    </ligand>
</feature>
<reference key="1">
    <citation type="journal article" date="2000" name="Mol. Microbiol.">
        <title>Identification of alanine dehydrogenase and its role in mixed secretion of ammonium and alanine by pea bacteroids.</title>
        <authorList>
            <person name="Allaway D.A."/>
            <person name="Lodwig E.M."/>
            <person name="Crompton L.A."/>
            <person name="Wood M."/>
            <person name="Parsons R."/>
            <person name="Wheeler T.R."/>
            <person name="Poole P.S."/>
        </authorList>
    </citation>
    <scope>NUCLEOTIDE SEQUENCE [GENOMIC DNA]</scope>
</reference>
<reference key="2">
    <citation type="journal article" date="2006" name="Genome Biol.">
        <title>The genome of Rhizobium leguminosarum has recognizable core and accessory components.</title>
        <authorList>
            <person name="Young J.P.W."/>
            <person name="Crossman L.C."/>
            <person name="Johnston A.W.B."/>
            <person name="Thomson N.R."/>
            <person name="Ghazoui Z.F."/>
            <person name="Hull K.H."/>
            <person name="Wexler M."/>
            <person name="Curson A.R.J."/>
            <person name="Todd J.D."/>
            <person name="Poole P.S."/>
            <person name="Mauchline T.H."/>
            <person name="East A.K."/>
            <person name="Quail M.A."/>
            <person name="Churcher C."/>
            <person name="Arrowsmith C."/>
            <person name="Cherevach I."/>
            <person name="Chillingworth T."/>
            <person name="Clarke K."/>
            <person name="Cronin A."/>
            <person name="Davis P."/>
            <person name="Fraser A."/>
            <person name="Hance Z."/>
            <person name="Hauser H."/>
            <person name="Jagels K."/>
            <person name="Moule S."/>
            <person name="Mungall K."/>
            <person name="Norbertczak H."/>
            <person name="Rabbinowitsch E."/>
            <person name="Sanders M."/>
            <person name="Simmonds M."/>
            <person name="Whitehead S."/>
            <person name="Parkhill J."/>
        </authorList>
    </citation>
    <scope>NUCLEOTIDE SEQUENCE [LARGE SCALE GENOMIC DNA]</scope>
    <source>
        <strain>DSM 114642 / LMG 32736 / 3841</strain>
        <plasmid>pRL12</plasmid>
    </source>
</reference>
<geneLocation type="plasmid">
    <name>pRL12</name>
</geneLocation>
<name>DADA_RHIJ3</name>
<protein>
    <recommendedName>
        <fullName evidence="1">D-amino acid dehydrogenase</fullName>
        <ecNumber evidence="1">1.4.99.-</ecNumber>
    </recommendedName>
</protein>
<evidence type="ECO:0000255" key="1">
    <source>
        <dbReference type="HAMAP-Rule" id="MF_01202"/>
    </source>
</evidence>
<gene>
    <name evidence="1" type="primary">dadA</name>
    <name type="ordered locus">pRL120417</name>
</gene>